<proteinExistence type="evidence at protein level"/>
<accession>Q3J1A6</accession>
<accession>P02953</accession>
<accession>Q9RFB8</accession>
<feature type="initiator methionine" description="Removed" evidence="1">
    <location>
        <position position="1"/>
    </location>
</feature>
<feature type="chain" id="PRO_0000090418" description="Reaction center protein M chain">
    <location>
        <begin position="2"/>
        <end position="308"/>
    </location>
</feature>
<feature type="transmembrane region" description="Helical" evidence="1">
    <location>
        <begin position="54"/>
        <end position="80"/>
    </location>
</feature>
<feature type="transmembrane region" description="Helical" evidence="1">
    <location>
        <begin position="111"/>
        <end position="140"/>
    </location>
</feature>
<feature type="transmembrane region" description="Helical" evidence="1">
    <location>
        <begin position="143"/>
        <end position="168"/>
    </location>
</feature>
<feature type="transmembrane region" description="Helical" evidence="1">
    <location>
        <begin position="198"/>
        <end position="226"/>
    </location>
</feature>
<feature type="transmembrane region" description="Helical" evidence="1">
    <location>
        <begin position="260"/>
        <end position="286"/>
    </location>
</feature>
<feature type="binding site" description="axial binding residue" evidence="1">
    <location>
        <position position="183"/>
    </location>
    <ligand>
        <name>(7R,8Z)-bacteriochlorophyll b</name>
        <dbReference type="ChEBI" id="CHEBI:30034"/>
    </ligand>
    <ligandPart>
        <name>Mg</name>
        <dbReference type="ChEBI" id="CHEBI:25107"/>
    </ligandPart>
</feature>
<feature type="binding site" description="axial binding residue" evidence="1">
    <location>
        <position position="203"/>
    </location>
    <ligand>
        <name>(7R,8Z)-bacteriochlorophyll b</name>
        <dbReference type="ChEBI" id="CHEBI:30034"/>
    </ligand>
    <ligandPart>
        <name>Mg</name>
        <dbReference type="ChEBI" id="CHEBI:25107"/>
    </ligandPart>
</feature>
<feature type="binding site" evidence="1">
    <location>
        <position position="220"/>
    </location>
    <ligand>
        <name>Fe cation</name>
        <dbReference type="ChEBI" id="CHEBI:24875"/>
    </ligand>
</feature>
<feature type="binding site" evidence="1">
    <location>
        <position position="235"/>
    </location>
    <ligand>
        <name>Fe cation</name>
        <dbReference type="ChEBI" id="CHEBI:24875"/>
    </ligand>
</feature>
<feature type="binding site" evidence="1">
    <location>
        <position position="253"/>
    </location>
    <ligand>
        <name>a ubiquinone</name>
        <dbReference type="ChEBI" id="CHEBI:16389"/>
    </ligand>
</feature>
<feature type="binding site" evidence="1">
    <location>
        <position position="267"/>
    </location>
    <ligand>
        <name>Fe cation</name>
        <dbReference type="ChEBI" id="CHEBI:24875"/>
    </ligand>
</feature>
<feature type="sequence conflict" description="In Ref. 1; AAF24305." evidence="2" ref="1">
    <original>A</original>
    <variation>E</variation>
    <location>
        <position position="245"/>
    </location>
</feature>
<feature type="strand" evidence="4">
    <location>
        <begin position="6"/>
        <end position="8"/>
    </location>
</feature>
<feature type="strand" evidence="4">
    <location>
        <begin position="10"/>
        <end position="14"/>
    </location>
</feature>
<feature type="helix" evidence="4">
    <location>
        <begin position="27"/>
        <end position="29"/>
    </location>
</feature>
<feature type="helix" evidence="4">
    <location>
        <begin position="40"/>
        <end position="42"/>
    </location>
</feature>
<feature type="helix" evidence="4">
    <location>
        <begin position="55"/>
        <end position="78"/>
    </location>
</feature>
<feature type="turn" evidence="4">
    <location>
        <begin position="79"/>
        <end position="81"/>
    </location>
</feature>
<feature type="helix" evidence="4">
    <location>
        <begin position="83"/>
        <end position="88"/>
    </location>
</feature>
<feature type="turn" evidence="4">
    <location>
        <begin position="89"/>
        <end position="92"/>
    </location>
</feature>
<feature type="helix" evidence="4">
    <location>
        <begin position="100"/>
        <end position="102"/>
    </location>
</feature>
<feature type="helix" evidence="4">
    <location>
        <begin position="110"/>
        <end position="112"/>
    </location>
</feature>
<feature type="helix" evidence="4">
    <location>
        <begin position="114"/>
        <end position="140"/>
    </location>
</feature>
<feature type="helix" evidence="4">
    <location>
        <begin position="146"/>
        <end position="162"/>
    </location>
</feature>
<feature type="helix" evidence="4">
    <location>
        <begin position="164"/>
        <end position="169"/>
    </location>
</feature>
<feature type="helix" evidence="4">
    <location>
        <begin position="172"/>
        <end position="174"/>
    </location>
</feature>
<feature type="helix" evidence="4">
    <location>
        <begin position="180"/>
        <end position="193"/>
    </location>
</feature>
<feature type="helix" evidence="4">
    <location>
        <begin position="197"/>
        <end position="199"/>
    </location>
</feature>
<feature type="helix" evidence="4">
    <location>
        <begin position="201"/>
        <end position="226"/>
    </location>
</feature>
<feature type="helix" evidence="4">
    <location>
        <begin position="228"/>
        <end position="230"/>
    </location>
</feature>
<feature type="turn" evidence="4">
    <location>
        <begin position="231"/>
        <end position="233"/>
    </location>
</feature>
<feature type="helix" evidence="4">
    <location>
        <begin position="235"/>
        <end position="240"/>
    </location>
</feature>
<feature type="helix" evidence="4">
    <location>
        <begin position="244"/>
        <end position="257"/>
    </location>
</feature>
<feature type="helix" evidence="4">
    <location>
        <begin position="265"/>
        <end position="286"/>
    </location>
</feature>
<feature type="turn" evidence="4">
    <location>
        <begin position="289"/>
        <end position="291"/>
    </location>
</feature>
<feature type="helix" evidence="4">
    <location>
        <begin position="295"/>
        <end position="301"/>
    </location>
</feature>
<feature type="strand" evidence="3">
    <location>
        <begin position="303"/>
        <end position="305"/>
    </location>
</feature>
<sequence>MAEYQNIFSQVQVRGPADLGMTEDVNLANRSGVGPFSTLLGWFGNAQLGPIYLGSLGVLSLFSGLMWFFTIGIWFWYQAGWNPAVFLRDLFFFSLEPPAPEYGLSFAAPLKEGGLWLIASFFMFVAVWSWWGRTYLRAQALGMGKHTAWAFLSAIWLWMVLGFIRPILMGSWSEAVPYGIFSHLDWTNNFSLVHGNLFYNPFHGLSIAFLYGSALLFAMHGATILAVSRFGGERELEQIADRGTAAERAALFWRWTMGFNATMEGIHRWAIWMAVLVTLTGGIGILLSGTVVDNWYVWGQNHGMAPLN</sequence>
<dbReference type="EMBL" id="AF195122">
    <property type="protein sequence ID" value="AAF24305.1"/>
    <property type="molecule type" value="Genomic_DNA"/>
</dbReference>
<dbReference type="EMBL" id="CP000143">
    <property type="protein sequence ID" value="ABA79428.1"/>
    <property type="molecule type" value="Genomic_DNA"/>
</dbReference>
<dbReference type="PIR" id="T50761">
    <property type="entry name" value="T50761"/>
</dbReference>
<dbReference type="RefSeq" id="WP_002720420.1">
    <property type="nucleotide sequence ID" value="NZ_CP030271.1"/>
</dbReference>
<dbReference type="RefSeq" id="YP_353329.1">
    <property type="nucleotide sequence ID" value="NC_007493.2"/>
</dbReference>
<dbReference type="PDB" id="2WX5">
    <property type="method" value="X-ray"/>
    <property type="resolution" value="2.63 A"/>
    <property type="chains" value="M=2-308"/>
</dbReference>
<dbReference type="PDB" id="4IN5">
    <property type="method" value="X-ray"/>
    <property type="resolution" value="2.20 A"/>
    <property type="chains" value="M=1-307"/>
</dbReference>
<dbReference type="PDB" id="4IN6">
    <property type="method" value="X-ray"/>
    <property type="resolution" value="2.70 A"/>
    <property type="chains" value="M=2-303"/>
</dbReference>
<dbReference type="PDB" id="4N7L">
    <property type="method" value="X-ray"/>
    <property type="resolution" value="2.85 A"/>
    <property type="chains" value="M=2-304"/>
</dbReference>
<dbReference type="PDB" id="5LRI">
    <property type="method" value="X-ray"/>
    <property type="resolution" value="2.40 A"/>
    <property type="chains" value="M=2-308"/>
</dbReference>
<dbReference type="PDB" id="7F0L">
    <property type="method" value="EM"/>
    <property type="resolution" value="2.94 A"/>
    <property type="chains" value="M=1-308"/>
</dbReference>
<dbReference type="PDB" id="7P2C">
    <property type="method" value="X-ray"/>
    <property type="resolution" value="2.04 A"/>
    <property type="chains" value="M=2-304"/>
</dbReference>
<dbReference type="PDB" id="7PIL">
    <property type="method" value="EM"/>
    <property type="resolution" value="2.50 A"/>
    <property type="chains" value="M=2-308"/>
</dbReference>
<dbReference type="PDB" id="7PQD">
    <property type="method" value="EM"/>
    <property type="resolution" value="2.90 A"/>
    <property type="chains" value="M/m=2-308"/>
</dbReference>
<dbReference type="PDB" id="7VA9">
    <property type="method" value="EM"/>
    <property type="resolution" value="3.08 A"/>
    <property type="chains" value="M/m=1-308"/>
</dbReference>
<dbReference type="PDB" id="7VB9">
    <property type="method" value="EM"/>
    <property type="resolution" value="3.45 A"/>
    <property type="chains" value="M/m=1-308"/>
</dbReference>
<dbReference type="PDB" id="7VNM">
    <property type="method" value="EM"/>
    <property type="resolution" value="2.86 A"/>
    <property type="chains" value="M=1-308"/>
</dbReference>
<dbReference type="PDB" id="7VNY">
    <property type="method" value="EM"/>
    <property type="resolution" value="2.79 A"/>
    <property type="chains" value="M=1-308"/>
</dbReference>
<dbReference type="PDB" id="7VOR">
    <property type="method" value="EM"/>
    <property type="resolution" value="2.74 A"/>
    <property type="chains" value="M/m=1-308"/>
</dbReference>
<dbReference type="PDB" id="7VOT">
    <property type="method" value="EM"/>
    <property type="resolution" value="2.90 A"/>
    <property type="chains" value="M/m=1-308"/>
</dbReference>
<dbReference type="PDB" id="7VOY">
    <property type="method" value="EM"/>
    <property type="resolution" value="4.20 A"/>
    <property type="chains" value="M=1-308"/>
</dbReference>
<dbReference type="PDBsum" id="2WX5"/>
<dbReference type="PDBsum" id="4IN5"/>
<dbReference type="PDBsum" id="4IN6"/>
<dbReference type="PDBsum" id="4N7L"/>
<dbReference type="PDBsum" id="5LRI"/>
<dbReference type="PDBsum" id="7F0L"/>
<dbReference type="PDBsum" id="7P2C"/>
<dbReference type="PDBsum" id="7PIL"/>
<dbReference type="PDBsum" id="7PQD"/>
<dbReference type="PDBsum" id="7VA9"/>
<dbReference type="PDBsum" id="7VB9"/>
<dbReference type="PDBsum" id="7VNM"/>
<dbReference type="PDBsum" id="7VNY"/>
<dbReference type="PDBsum" id="7VOR"/>
<dbReference type="PDBsum" id="7VOT"/>
<dbReference type="PDBsum" id="7VOY"/>
<dbReference type="EMDB" id="EMD-13441"/>
<dbReference type="EMDB" id="EMD-13590"/>
<dbReference type="EMDB" id="EMD-31400"/>
<dbReference type="EMDB" id="EMD-31835"/>
<dbReference type="EMDB" id="EMD-31875"/>
<dbReference type="EMDB" id="EMD-32042"/>
<dbReference type="EMDB" id="EMD-32047"/>
<dbReference type="EMDB" id="EMD-32058"/>
<dbReference type="EMDB" id="EMD-32059"/>
<dbReference type="EMDB" id="EMD-32062"/>
<dbReference type="SMR" id="Q3J1A6"/>
<dbReference type="STRING" id="272943.RSP_0256"/>
<dbReference type="DrugBank" id="DB04147">
    <property type="generic name" value="Dodecyldimethylamine N-oxide"/>
</dbReference>
<dbReference type="EnsemblBacteria" id="ABA79428">
    <property type="protein sequence ID" value="ABA79428"/>
    <property type="gene ID" value="RSP_0256"/>
</dbReference>
<dbReference type="GeneID" id="67446989"/>
<dbReference type="KEGG" id="rsp:RSP_0256"/>
<dbReference type="PATRIC" id="fig|272943.9.peg.2199"/>
<dbReference type="eggNOG" id="ENOG502Z87P">
    <property type="taxonomic scope" value="Bacteria"/>
</dbReference>
<dbReference type="OrthoDB" id="8555181at2"/>
<dbReference type="PhylomeDB" id="Q3J1A6"/>
<dbReference type="EvolutionaryTrace" id="Q3J1A6"/>
<dbReference type="Proteomes" id="UP000002703">
    <property type="component" value="Chromosome 1"/>
</dbReference>
<dbReference type="GO" id="GO:0030077">
    <property type="term" value="C:plasma membrane light-harvesting complex"/>
    <property type="evidence" value="ECO:0007669"/>
    <property type="project" value="InterPro"/>
</dbReference>
<dbReference type="GO" id="GO:0042717">
    <property type="term" value="C:plasma membrane-derived chromatophore membrane"/>
    <property type="evidence" value="ECO:0007669"/>
    <property type="project" value="UniProtKB-SubCell"/>
</dbReference>
<dbReference type="GO" id="GO:0042314">
    <property type="term" value="F:bacteriochlorophyll binding"/>
    <property type="evidence" value="ECO:0007669"/>
    <property type="project" value="UniProtKB-KW"/>
</dbReference>
<dbReference type="GO" id="GO:0045156">
    <property type="term" value="F:electron transporter, transferring electrons within the cyclic electron transport pathway of photosynthesis activity"/>
    <property type="evidence" value="ECO:0007669"/>
    <property type="project" value="InterPro"/>
</dbReference>
<dbReference type="GO" id="GO:0046872">
    <property type="term" value="F:metal ion binding"/>
    <property type="evidence" value="ECO:0007669"/>
    <property type="project" value="UniProtKB-KW"/>
</dbReference>
<dbReference type="GO" id="GO:0009772">
    <property type="term" value="P:photosynthetic electron transport in photosystem II"/>
    <property type="evidence" value="ECO:0007669"/>
    <property type="project" value="InterPro"/>
</dbReference>
<dbReference type="CDD" id="cd09291">
    <property type="entry name" value="Photo-RC_M"/>
    <property type="match status" value="1"/>
</dbReference>
<dbReference type="Gene3D" id="1.20.85.10">
    <property type="entry name" value="Photosystem II protein D1-like"/>
    <property type="match status" value="2"/>
</dbReference>
<dbReference type="InterPro" id="IPR036854">
    <property type="entry name" value="Photo_II_D1/D2_sf"/>
</dbReference>
<dbReference type="InterPro" id="IPR000484">
    <property type="entry name" value="Photo_RC_L/M"/>
</dbReference>
<dbReference type="InterPro" id="IPR055265">
    <property type="entry name" value="Photo_RC_L/M_CS"/>
</dbReference>
<dbReference type="InterPro" id="IPR005781">
    <property type="entry name" value="Photo_RC_M"/>
</dbReference>
<dbReference type="NCBIfam" id="TIGR01115">
    <property type="entry name" value="pufM"/>
    <property type="match status" value="1"/>
</dbReference>
<dbReference type="Pfam" id="PF00124">
    <property type="entry name" value="Photo_RC"/>
    <property type="match status" value="1"/>
</dbReference>
<dbReference type="PRINTS" id="PR00256">
    <property type="entry name" value="REACTNCENTRE"/>
</dbReference>
<dbReference type="SUPFAM" id="SSF81483">
    <property type="entry name" value="Bacterial photosystem II reaction centre, L and M subunits"/>
    <property type="match status" value="1"/>
</dbReference>
<dbReference type="PROSITE" id="PS00244">
    <property type="entry name" value="REACTION_CENTER"/>
    <property type="match status" value="1"/>
</dbReference>
<reference key="1">
    <citation type="journal article" date="2000" name="Nucleic Acids Res.">
        <title>DNA sequence analysis of the photosynthesis region of Rhodobacter sphaeroides 2.4.1.</title>
        <authorList>
            <person name="Choudhary M."/>
            <person name="Kaplan S."/>
        </authorList>
    </citation>
    <scope>NUCLEOTIDE SEQUENCE [GENOMIC DNA]</scope>
</reference>
<reference key="2">
    <citation type="submission" date="2005-09" db="EMBL/GenBank/DDBJ databases">
        <title>Complete sequence of chromosome 1 of Rhodobacter sphaeroides 2.4.1.</title>
        <authorList>
            <person name="Copeland A."/>
            <person name="Lucas S."/>
            <person name="Lapidus A."/>
            <person name="Barry K."/>
            <person name="Detter J.C."/>
            <person name="Glavina T."/>
            <person name="Hammon N."/>
            <person name="Israni S."/>
            <person name="Pitluck S."/>
            <person name="Richardson P."/>
            <person name="Mackenzie C."/>
            <person name="Choudhary M."/>
            <person name="Larimer F."/>
            <person name="Hauser L.J."/>
            <person name="Land M."/>
            <person name="Donohue T.J."/>
            <person name="Kaplan S."/>
        </authorList>
    </citation>
    <scope>NUCLEOTIDE SEQUENCE [LARGE SCALE GENOMIC DNA]</scope>
    <source>
        <strain>ATCC 17023 / DSM 158 / JCM 6121 / CCUG 31486 / LMG 2827 / NBRC 12203 / NCIMB 8253 / ATH 2.4.1.</strain>
    </source>
</reference>
<name>RCEM_CERS4</name>
<gene>
    <name type="primary">pufM</name>
    <name type="ordered locus">RHOS4_18600</name>
    <name type="ORF">RSP_0256</name>
</gene>
<comment type="function">
    <text evidence="1">The reaction center is a membrane-bound complex that mediates the initial photochemical event in the electron transfer process of photosynthesis.</text>
</comment>
<comment type="subunit">
    <text evidence="1">Reaction center is composed of four bacteriochlorophylls, two bacteriopheophytins, two ubiquinones, one iron, and three highly hydrophobic polypeptide chains (designated L, M, and H).</text>
</comment>
<comment type="subcellular location">
    <subcellularLocation>
        <location evidence="1">Cellular chromatophore membrane</location>
        <topology evidence="1">Multi-pass membrane protein</topology>
    </subcellularLocation>
</comment>
<comment type="similarity">
    <text evidence="2">Belongs to the reaction center PufL/M/PsbA/D family.</text>
</comment>
<evidence type="ECO:0000250" key="1"/>
<evidence type="ECO:0000305" key="2"/>
<evidence type="ECO:0007829" key="3">
    <source>
        <dbReference type="PDB" id="7F0L"/>
    </source>
</evidence>
<evidence type="ECO:0007829" key="4">
    <source>
        <dbReference type="PDB" id="7P2C"/>
    </source>
</evidence>
<protein>
    <recommendedName>
        <fullName>Reaction center protein M chain</fullName>
    </recommendedName>
    <alternativeName>
        <fullName>Photosynthetic reaction center M subunit</fullName>
    </alternativeName>
</protein>
<organism>
    <name type="scientific">Cereibacter sphaeroides (strain ATCC 17023 / DSM 158 / JCM 6121 / CCUG 31486 / LMG 2827 / NBRC 12203 / NCIMB 8253 / ATH 2.4.1.)</name>
    <name type="common">Rhodobacter sphaeroides</name>
    <dbReference type="NCBI Taxonomy" id="272943"/>
    <lineage>
        <taxon>Bacteria</taxon>
        <taxon>Pseudomonadati</taxon>
        <taxon>Pseudomonadota</taxon>
        <taxon>Alphaproteobacteria</taxon>
        <taxon>Rhodobacterales</taxon>
        <taxon>Paracoccaceae</taxon>
        <taxon>Cereibacter</taxon>
    </lineage>
</organism>
<keyword id="KW-0002">3D-structure</keyword>
<keyword id="KW-0076">Bacteriochlorophyll</keyword>
<keyword id="KW-0148">Chlorophyll</keyword>
<keyword id="KW-0157">Chromophore</keyword>
<keyword id="KW-0249">Electron transport</keyword>
<keyword id="KW-0408">Iron</keyword>
<keyword id="KW-0460">Magnesium</keyword>
<keyword id="KW-0472">Membrane</keyword>
<keyword id="KW-0479">Metal-binding</keyword>
<keyword id="KW-0602">Photosynthesis</keyword>
<keyword id="KW-0674">Reaction center</keyword>
<keyword id="KW-1185">Reference proteome</keyword>
<keyword id="KW-0812">Transmembrane</keyword>
<keyword id="KW-1133">Transmembrane helix</keyword>
<keyword id="KW-0813">Transport</keyword>